<dbReference type="EC" id="1.11.1.7"/>
<dbReference type="EMBL" id="CM000762">
    <property type="protein sequence ID" value="EES02106.1"/>
    <property type="molecule type" value="Genomic_DNA"/>
</dbReference>
<dbReference type="EMBL" id="CD222694">
    <property type="status" value="NOT_ANNOTATED_CDS"/>
    <property type="molecule type" value="mRNA"/>
</dbReference>
<dbReference type="EMBL" id="CD226279">
    <property type="status" value="NOT_ANNOTATED_CDS"/>
    <property type="molecule type" value="mRNA"/>
</dbReference>
<dbReference type="RefSeq" id="XP_002456986.1">
    <property type="nucleotide sequence ID" value="XM_002456941.1"/>
</dbReference>
<dbReference type="PDB" id="5AOG">
    <property type="method" value="X-ray"/>
    <property type="resolution" value="1.27 A"/>
    <property type="chains" value="A=34-340"/>
</dbReference>
<dbReference type="PDBsum" id="5AOG"/>
<dbReference type="SMR" id="P84516"/>
<dbReference type="STRING" id="4558.P84516"/>
<dbReference type="PeroxiBase" id="853">
    <property type="entry name" value="SbPrx69"/>
</dbReference>
<dbReference type="iPTMnet" id="P84516"/>
<dbReference type="EnsemblPlants" id="EES02106">
    <property type="protein sequence ID" value="EES02106"/>
    <property type="gene ID" value="SORBI_3003G437400"/>
</dbReference>
<dbReference type="Gramene" id="EES02106">
    <property type="protein sequence ID" value="EES02106"/>
    <property type="gene ID" value="SORBI_3003G437400"/>
</dbReference>
<dbReference type="KEGG" id="sbi:8074114"/>
<dbReference type="eggNOG" id="ENOG502QT8W">
    <property type="taxonomic scope" value="Eukaryota"/>
</dbReference>
<dbReference type="HOGENOM" id="CLU_010543_0_0_1"/>
<dbReference type="InParanoid" id="P84516"/>
<dbReference type="OMA" id="EIRENCW"/>
<dbReference type="OrthoDB" id="2113341at2759"/>
<dbReference type="BRENDA" id="1.11.1.7">
    <property type="organism ID" value="5768"/>
</dbReference>
<dbReference type="EvolutionaryTrace" id="P84516"/>
<dbReference type="Proteomes" id="UP000000768">
    <property type="component" value="Chromosome 3"/>
</dbReference>
<dbReference type="GO" id="GO:0005576">
    <property type="term" value="C:extracellular region"/>
    <property type="evidence" value="ECO:0007669"/>
    <property type="project" value="UniProtKB-SubCell"/>
</dbReference>
<dbReference type="GO" id="GO:0009505">
    <property type="term" value="C:plant-type cell wall"/>
    <property type="evidence" value="ECO:0000318"/>
    <property type="project" value="GO_Central"/>
</dbReference>
<dbReference type="GO" id="GO:0005509">
    <property type="term" value="F:calcium ion binding"/>
    <property type="evidence" value="ECO:0000314"/>
    <property type="project" value="UniProtKB"/>
</dbReference>
<dbReference type="GO" id="GO:0020037">
    <property type="term" value="F:heme binding"/>
    <property type="evidence" value="ECO:0000314"/>
    <property type="project" value="UniProtKB"/>
</dbReference>
<dbReference type="GO" id="GO:0140825">
    <property type="term" value="F:lactoperoxidase activity"/>
    <property type="evidence" value="ECO:0007669"/>
    <property type="project" value="UniProtKB-EC"/>
</dbReference>
<dbReference type="GO" id="GO:0004601">
    <property type="term" value="F:peroxidase activity"/>
    <property type="evidence" value="ECO:0000314"/>
    <property type="project" value="UniProtKB"/>
</dbReference>
<dbReference type="GO" id="GO:0042744">
    <property type="term" value="P:hydrogen peroxide catabolic process"/>
    <property type="evidence" value="ECO:0000314"/>
    <property type="project" value="UniProtKB"/>
</dbReference>
<dbReference type="GO" id="GO:0006979">
    <property type="term" value="P:response to oxidative stress"/>
    <property type="evidence" value="ECO:0007669"/>
    <property type="project" value="InterPro"/>
</dbReference>
<dbReference type="GO" id="GO:0006950">
    <property type="term" value="P:response to stress"/>
    <property type="evidence" value="ECO:0000318"/>
    <property type="project" value="GO_Central"/>
</dbReference>
<dbReference type="CDD" id="cd00693">
    <property type="entry name" value="secretory_peroxidase"/>
    <property type="match status" value="1"/>
</dbReference>
<dbReference type="FunFam" id="1.10.420.10:FF:000006">
    <property type="entry name" value="Peroxidase"/>
    <property type="match status" value="1"/>
</dbReference>
<dbReference type="FunFam" id="1.10.520.10:FF:000009">
    <property type="entry name" value="Peroxidase"/>
    <property type="match status" value="1"/>
</dbReference>
<dbReference type="Gene3D" id="1.10.520.10">
    <property type="match status" value="1"/>
</dbReference>
<dbReference type="Gene3D" id="1.10.420.10">
    <property type="entry name" value="Peroxidase, domain 2"/>
    <property type="match status" value="1"/>
</dbReference>
<dbReference type="InterPro" id="IPR002016">
    <property type="entry name" value="Haem_peroxidase"/>
</dbReference>
<dbReference type="InterPro" id="IPR010255">
    <property type="entry name" value="Haem_peroxidase_sf"/>
</dbReference>
<dbReference type="InterPro" id="IPR000823">
    <property type="entry name" value="Peroxidase_pln"/>
</dbReference>
<dbReference type="InterPro" id="IPR019794">
    <property type="entry name" value="Peroxidases_AS"/>
</dbReference>
<dbReference type="InterPro" id="IPR019793">
    <property type="entry name" value="Peroxidases_heam-ligand_BS"/>
</dbReference>
<dbReference type="InterPro" id="IPR033905">
    <property type="entry name" value="Secretory_peroxidase"/>
</dbReference>
<dbReference type="PANTHER" id="PTHR31388:SF5">
    <property type="entry name" value="PEROXIDASE"/>
    <property type="match status" value="1"/>
</dbReference>
<dbReference type="PANTHER" id="PTHR31388">
    <property type="entry name" value="PEROXIDASE 72-RELATED"/>
    <property type="match status" value="1"/>
</dbReference>
<dbReference type="Pfam" id="PF00141">
    <property type="entry name" value="peroxidase"/>
    <property type="match status" value="1"/>
</dbReference>
<dbReference type="PRINTS" id="PR00458">
    <property type="entry name" value="PEROXIDASE"/>
</dbReference>
<dbReference type="PRINTS" id="PR00461">
    <property type="entry name" value="PLPEROXIDASE"/>
</dbReference>
<dbReference type="SUPFAM" id="SSF48113">
    <property type="entry name" value="Heme-dependent peroxidases"/>
    <property type="match status" value="1"/>
</dbReference>
<dbReference type="PROSITE" id="PS00435">
    <property type="entry name" value="PEROXIDASE_1"/>
    <property type="match status" value="1"/>
</dbReference>
<dbReference type="PROSITE" id="PS00436">
    <property type="entry name" value="PEROXIDASE_2"/>
    <property type="match status" value="1"/>
</dbReference>
<dbReference type="PROSITE" id="PS50873">
    <property type="entry name" value="PEROXIDASE_4"/>
    <property type="match status" value="1"/>
</dbReference>
<organism>
    <name type="scientific">Sorghum bicolor</name>
    <name type="common">Sorghum</name>
    <name type="synonym">Sorghum vulgare</name>
    <dbReference type="NCBI Taxonomy" id="4558"/>
    <lineage>
        <taxon>Eukaryota</taxon>
        <taxon>Viridiplantae</taxon>
        <taxon>Streptophyta</taxon>
        <taxon>Embryophyta</taxon>
        <taxon>Tracheophyta</taxon>
        <taxon>Spermatophyta</taxon>
        <taxon>Magnoliopsida</taxon>
        <taxon>Liliopsida</taxon>
        <taxon>Poales</taxon>
        <taxon>Poaceae</taxon>
        <taxon>PACMAD clade</taxon>
        <taxon>Panicoideae</taxon>
        <taxon>Andropogonodae</taxon>
        <taxon>Andropogoneae</taxon>
        <taxon>Sorghinae</taxon>
        <taxon>Sorghum</taxon>
    </lineage>
</organism>
<protein>
    <recommendedName>
        <fullName>Cationic peroxidase SPC4</fullName>
        <ecNumber>1.11.1.7</ecNumber>
    </recommendedName>
</protein>
<keyword id="KW-0002">3D-structure</keyword>
<keyword id="KW-0106">Calcium</keyword>
<keyword id="KW-0903">Direct protein sequencing</keyword>
<keyword id="KW-1015">Disulfide bond</keyword>
<keyword id="KW-0325">Glycoprotein</keyword>
<keyword id="KW-0349">Heme</keyword>
<keyword id="KW-0376">Hydrogen peroxide</keyword>
<keyword id="KW-0408">Iron</keyword>
<keyword id="KW-0479">Metal-binding</keyword>
<keyword id="KW-0560">Oxidoreductase</keyword>
<keyword id="KW-0575">Peroxidase</keyword>
<keyword id="KW-1185">Reference proteome</keyword>
<keyword id="KW-0964">Secreted</keyword>
<keyword id="KW-0732">Signal</keyword>
<gene>
    <name type="ordered locus">Sb03g046810</name>
</gene>
<comment type="function">
    <text evidence="3 5">Removal of H(2)O(2), oxidation of toxic reductants, biosynthesis and degradation of lignin, suberization, auxin catabolism, response to environmental stresses such as wounding, pathogen attack and oxidative stress. These functions might be dependent on each isozyme/isoform in each plant tissue (By similarity). Has a high preference for hydroxycinnamates as substrates. Substrate preference is ferulic acid &gt; p-coumaric acid &gt; N-acetyl tyrosine methyl ester &gt; N-acetyl-tyrosine &gt; tyrosine &gt; catechol &gt; Gly-Tyr-Gly. May be involved in the formation of diferulate linkages in the plant cell wall (PubMed:16650004).</text>
</comment>
<comment type="catalytic activity">
    <reaction evidence="5">
        <text>2 a phenolic donor + H2O2 = 2 a phenolic radical donor + 2 H2O</text>
        <dbReference type="Rhea" id="RHEA:56136"/>
        <dbReference type="ChEBI" id="CHEBI:15377"/>
        <dbReference type="ChEBI" id="CHEBI:16240"/>
        <dbReference type="ChEBI" id="CHEBI:139520"/>
        <dbReference type="ChEBI" id="CHEBI:139521"/>
        <dbReference type="EC" id="1.11.1.7"/>
    </reaction>
</comment>
<comment type="cofactor">
    <cofactor evidence="3 5 6">
        <name>heme b</name>
        <dbReference type="ChEBI" id="CHEBI:60344"/>
    </cofactor>
    <text evidence="3 5 6">Binds 1 heme b (iron(II)-protoporphyrin IX) group per subunit.</text>
</comment>
<comment type="cofactor">
    <cofactor evidence="3 5 6">
        <name>Ca(2+)</name>
        <dbReference type="ChEBI" id="CHEBI:29108"/>
    </cofactor>
    <text evidence="3 5 6">Binds 2 calcium ions per subunit.</text>
</comment>
<comment type="biophysicochemical properties">
    <phDependence>
        <text>Optimum pH is 3.8 with 2.2'-azino-bis(3-ethylbenzthiazoline-6-sulfonic acid) as substrate, 5.5 with ferulic acid as substrate, and 6.5 with N-acetyl-L-tyrosine as substrate.</text>
    </phDependence>
    <temperatureDependence>
        <text>Loss of activity at temperature above 55 degrees Celsius. In the presence of excess calcium, full activity is kept at 65 degrees Celsius for 90 minutes.</text>
    </temperatureDependence>
</comment>
<comment type="subunit">
    <text evidence="5">Monomer.</text>
</comment>
<comment type="subcellular location">
    <subcellularLocation>
        <location evidence="3 5">Secreted</location>
    </subcellularLocation>
</comment>
<comment type="tissue specificity">
    <text evidence="5">Present in germinated and ungerminated grain, seedlings, and leaves and stem of the mature plant.</text>
</comment>
<comment type="PTM">
    <text>The proportions of glycoforms I and II are 35% and 65% respectively.</text>
</comment>
<comment type="mass spectrometry">
    <text>Deglycosylated form.</text>
</comment>
<comment type="mass spectrometry">
    <text>Glycoform I.</text>
</comment>
<comment type="mass spectrometry">
    <text>Glycoform II.</text>
</comment>
<comment type="similarity">
    <text evidence="3">Belongs to the peroxidase family. Classical plant (class III) peroxidase subfamily.</text>
</comment>
<name>PER1_SORBI</name>
<proteinExistence type="evidence at protein level"/>
<accession>P84516</accession>
<accession>C5XIP7</accession>
<feature type="signal peptide" evidence="5">
    <location>
        <begin position="1"/>
        <end position="31"/>
    </location>
</feature>
<feature type="chain" id="PRO_0000045853" description="Cationic peroxidase SPC4">
    <location>
        <begin position="32"/>
        <end position="362"/>
    </location>
</feature>
<feature type="active site" description="Proton acceptor" evidence="1 3 4">
    <location>
        <position position="81"/>
    </location>
</feature>
<feature type="binding site" evidence="3 6 9">
    <location>
        <position position="82"/>
    </location>
    <ligand>
        <name>Ca(2+)</name>
        <dbReference type="ChEBI" id="CHEBI:29108"/>
        <label>1</label>
    </ligand>
</feature>
<feature type="binding site" evidence="3 6 9">
    <location>
        <position position="85"/>
    </location>
    <ligand>
        <name>Ca(2+)</name>
        <dbReference type="ChEBI" id="CHEBI:29108"/>
        <label>1</label>
    </ligand>
</feature>
<feature type="binding site" evidence="3 6 9">
    <location>
        <position position="87"/>
    </location>
    <ligand>
        <name>Ca(2+)</name>
        <dbReference type="ChEBI" id="CHEBI:29108"/>
        <label>1</label>
    </ligand>
</feature>
<feature type="binding site" evidence="3 6 9">
    <location>
        <position position="89"/>
    </location>
    <ligand>
        <name>Ca(2+)</name>
        <dbReference type="ChEBI" id="CHEBI:29108"/>
        <label>1</label>
    </ligand>
</feature>
<feature type="binding site" evidence="3 6 9">
    <location>
        <position position="91"/>
    </location>
    <ligand>
        <name>Ca(2+)</name>
        <dbReference type="ChEBI" id="CHEBI:29108"/>
        <label>1</label>
    </ligand>
</feature>
<feature type="binding site" evidence="6 9">
    <location>
        <position position="111"/>
    </location>
    <ligand>
        <name>(indol-3-yl)acetate</name>
        <dbReference type="ChEBI" id="CHEBI:30854"/>
    </ligand>
</feature>
<feature type="binding site" evidence="3">
    <location>
        <position position="181"/>
    </location>
    <ligand>
        <name>substrate</name>
    </ligand>
</feature>
<feature type="binding site" description="axial binding residue" evidence="3 6 9">
    <location>
        <position position="211"/>
    </location>
    <ligand>
        <name>heme b</name>
        <dbReference type="ChEBI" id="CHEBI:60344"/>
    </ligand>
    <ligandPart>
        <name>Fe</name>
        <dbReference type="ChEBI" id="CHEBI:18248"/>
    </ligandPart>
</feature>
<feature type="binding site" evidence="3 6 9">
    <location>
        <position position="212"/>
    </location>
    <ligand>
        <name>Ca(2+)</name>
        <dbReference type="ChEBI" id="CHEBI:29108"/>
        <label>2</label>
    </ligand>
</feature>
<feature type="binding site" evidence="3 6 9">
    <location>
        <position position="257"/>
    </location>
    <ligand>
        <name>Ca(2+)</name>
        <dbReference type="ChEBI" id="CHEBI:29108"/>
        <label>2</label>
    </ligand>
</feature>
<feature type="binding site" evidence="3 6 9">
    <location>
        <position position="260"/>
    </location>
    <ligand>
        <name>Ca(2+)</name>
        <dbReference type="ChEBI" id="CHEBI:29108"/>
        <label>2</label>
    </ligand>
</feature>
<feature type="binding site" evidence="6 9">
    <location>
        <position position="263"/>
    </location>
    <ligand>
        <name>Ca(2+)</name>
        <dbReference type="ChEBI" id="CHEBI:29108"/>
        <label>2</label>
    </ligand>
</feature>
<feature type="binding site" evidence="3 6 9">
    <location>
        <position position="265"/>
    </location>
    <ligand>
        <name>Ca(2+)</name>
        <dbReference type="ChEBI" id="CHEBI:29108"/>
        <label>2</label>
    </ligand>
</feature>
<feature type="site" description="Transition state stabilizer" evidence="1 3">
    <location>
        <position position="77"/>
    </location>
</feature>
<feature type="glycosylation site" description="N-linked (GlcNAc...) asparagine" evidence="2">
    <location>
        <position position="109"/>
    </location>
</feature>
<feature type="glycosylation site" description="N-linked (GlcNAc...) asparagine" evidence="2 6 9">
    <location>
        <position position="234"/>
    </location>
</feature>
<feature type="glycosylation site" description="N-linked (GlcNAc...) asparagine" evidence="2 6 9">
    <location>
        <position position="332"/>
    </location>
</feature>
<feature type="disulfide bond" evidence="3 6 9">
    <location>
        <begin position="50"/>
        <end position="131"/>
    </location>
</feature>
<feature type="disulfide bond" evidence="3 6 9">
    <location>
        <begin position="83"/>
        <end position="88"/>
    </location>
</feature>
<feature type="disulfide bond" evidence="3 6 9">
    <location>
        <begin position="138"/>
        <end position="333"/>
    </location>
</feature>
<feature type="disulfide bond" evidence="3 6 9">
    <location>
        <begin position="218"/>
        <end position="245"/>
    </location>
</feature>
<feature type="turn" evidence="10">
    <location>
        <begin position="43"/>
        <end position="49"/>
    </location>
</feature>
<feature type="helix" evidence="10">
    <location>
        <begin position="53"/>
        <end position="67"/>
    </location>
</feature>
<feature type="helix" evidence="10">
    <location>
        <begin position="71"/>
        <end position="84"/>
    </location>
</feature>
<feature type="strand" evidence="10">
    <location>
        <begin position="87"/>
        <end position="90"/>
    </location>
</feature>
<feature type="helix" evidence="10">
    <location>
        <begin position="91"/>
        <end position="93"/>
    </location>
</feature>
<feature type="helix" evidence="10">
    <location>
        <begin position="108"/>
        <end position="110"/>
    </location>
</feature>
<feature type="helix" evidence="10">
    <location>
        <begin position="114"/>
        <end position="131"/>
    </location>
</feature>
<feature type="helix" evidence="10">
    <location>
        <begin position="138"/>
        <end position="152"/>
    </location>
</feature>
<feature type="helix" evidence="10">
    <location>
        <begin position="173"/>
        <end position="179"/>
    </location>
</feature>
<feature type="helix" evidence="10">
    <location>
        <begin position="187"/>
        <end position="195"/>
    </location>
</feature>
<feature type="turn" evidence="10">
    <location>
        <begin position="196"/>
        <end position="198"/>
    </location>
</feature>
<feature type="helix" evidence="10">
    <location>
        <begin position="201"/>
        <end position="208"/>
    </location>
</feature>
<feature type="helix" evidence="10">
    <location>
        <begin position="209"/>
        <end position="212"/>
    </location>
</feature>
<feature type="strand" evidence="10">
    <location>
        <begin position="213"/>
        <end position="217"/>
    </location>
</feature>
<feature type="helix" evidence="10">
    <location>
        <begin position="218"/>
        <end position="220"/>
    </location>
</feature>
<feature type="helix" evidence="10">
    <location>
        <begin position="222"/>
        <end position="224"/>
    </location>
</feature>
<feature type="strand" evidence="10">
    <location>
        <begin position="226"/>
        <end position="228"/>
    </location>
</feature>
<feature type="helix" evidence="10">
    <location>
        <begin position="235"/>
        <end position="244"/>
    </location>
</feature>
<feature type="strand" evidence="10">
    <location>
        <begin position="253"/>
        <end position="256"/>
    </location>
</feature>
<feature type="strand" evidence="10">
    <location>
        <begin position="261"/>
        <end position="263"/>
    </location>
</feature>
<feature type="helix" evidence="10">
    <location>
        <begin position="267"/>
        <end position="273"/>
    </location>
</feature>
<feature type="helix" evidence="10">
    <location>
        <begin position="280"/>
        <end position="287"/>
    </location>
</feature>
<feature type="turn" evidence="10">
    <location>
        <begin position="289"/>
        <end position="291"/>
    </location>
</feature>
<feature type="helix" evidence="10">
    <location>
        <begin position="292"/>
        <end position="300"/>
    </location>
</feature>
<feature type="helix" evidence="10">
    <location>
        <begin position="302"/>
        <end position="316"/>
    </location>
</feature>
<feature type="turn" evidence="10">
    <location>
        <begin position="317"/>
        <end position="320"/>
    </location>
</feature>
<feature type="strand" evidence="10">
    <location>
        <begin position="326"/>
        <end position="328"/>
    </location>
</feature>
<reference key="1">
    <citation type="journal article" date="2009" name="Nature">
        <title>The Sorghum bicolor genome and the diversification of grasses.</title>
        <authorList>
            <person name="Paterson A.H."/>
            <person name="Bowers J.E."/>
            <person name="Bruggmann R."/>
            <person name="Dubchak I."/>
            <person name="Grimwood J."/>
            <person name="Gundlach H."/>
            <person name="Haberer G."/>
            <person name="Hellsten U."/>
            <person name="Mitros T."/>
            <person name="Poliakov A."/>
            <person name="Schmutz J."/>
            <person name="Spannagl M."/>
            <person name="Tang H."/>
            <person name="Wang X."/>
            <person name="Wicker T."/>
            <person name="Bharti A.K."/>
            <person name="Chapman J."/>
            <person name="Feltus F.A."/>
            <person name="Gowik U."/>
            <person name="Grigoriev I.V."/>
            <person name="Lyons E."/>
            <person name="Maher C.A."/>
            <person name="Martis M."/>
            <person name="Narechania A."/>
            <person name="Otillar R.P."/>
            <person name="Penning B.W."/>
            <person name="Salamov A.A."/>
            <person name="Wang Y."/>
            <person name="Zhang L."/>
            <person name="Carpita N.C."/>
            <person name="Freeling M."/>
            <person name="Gingle A.R."/>
            <person name="Hash C.T."/>
            <person name="Keller B."/>
            <person name="Klein P."/>
            <person name="Kresovich S."/>
            <person name="McCann M.C."/>
            <person name="Ming R."/>
            <person name="Peterson D.G."/>
            <person name="Mehboob-ur-Rahman M."/>
            <person name="Ware D."/>
            <person name="Westhoff P."/>
            <person name="Mayer K.F.X."/>
            <person name="Messing J."/>
            <person name="Rokhsar D.S."/>
        </authorList>
    </citation>
    <scope>NUCLEOTIDE SEQUENCE [LARGE SCALE GENOMIC DNA]</scope>
    <source>
        <strain>cv. BTx623</strain>
    </source>
</reference>
<reference key="2">
    <citation type="journal article" date="2018" name="Plant J.">
        <title>The Sorghum bicolor reference genome: improved assembly, gene annotations, a transcriptome atlas, and signatures of genome organization.</title>
        <authorList>
            <person name="McCormick R.F."/>
            <person name="Truong S.K."/>
            <person name="Sreedasyam A."/>
            <person name="Jenkins J."/>
            <person name="Shu S."/>
            <person name="Sims D."/>
            <person name="Kennedy M."/>
            <person name="Amirebrahimi M."/>
            <person name="Weers B.D."/>
            <person name="McKinley B."/>
            <person name="Mattison A."/>
            <person name="Morishige D.T."/>
            <person name="Grimwood J."/>
            <person name="Schmutz J."/>
            <person name="Mullet J.E."/>
        </authorList>
    </citation>
    <scope>GENOME REANNOTATION</scope>
    <source>
        <strain>cv. BTx623</strain>
    </source>
</reference>
<reference evidence="8" key="3">
    <citation type="submission" date="2003-05" db="EMBL/GenBank/DDBJ databases">
        <title>An EST database from Sorghum: callus culture and cell suspension.</title>
        <authorList>
            <person name="Cordonnier-Pratt M.-M."/>
            <person name="Wentzel V."/>
            <person name="Suzuki Y."/>
            <person name="Sugano S."/>
            <person name="Klein R.R."/>
            <person name="Liang C."/>
            <person name="Sun F."/>
            <person name="Sullivan R."/>
            <person name="Shah M."/>
            <person name="Rathore K."/>
            <person name="Eastman A."/>
            <person name="Pratt L.H."/>
        </authorList>
    </citation>
    <scope>NUCLEOTIDE SEQUENCE [LARGE SCALE MRNA] OF 1-213</scope>
    <source>
        <strain evidence="7">cv. RTx430</strain>
    </source>
</reference>
<reference key="4">
    <citation type="journal article" date="2006" name="FEBS J.">
        <title>Biochemical characterization of the major sorghum grain peroxidase.</title>
        <authorList>
            <person name="Dicko M.H."/>
            <person name="Gruppen H."/>
            <person name="Hilhorst R."/>
            <person name="Voragen A.G.J."/>
            <person name="van Berkel W.J.H."/>
        </authorList>
    </citation>
    <scope>PROTEIN SEQUENCE OF 32-58; 68-77 AND 127-164</scope>
    <scope>FUNCTION</scope>
    <scope>CATALYTIC ACTIVITY</scope>
    <scope>COFACTOR</scope>
    <scope>SUBUNIT</scope>
    <scope>SUBCELLULAR LOCATION</scope>
    <scope>TISSUE SPECIFICITY</scope>
    <scope>MASS SPECTROMETRY</scope>
    <source>
        <strain>cv. Cauga 105-15</strain>
        <tissue>Grain</tissue>
    </source>
</reference>
<reference key="5">
    <citation type="journal article" date="2016" name="J. Biol. Inorg. Chem.">
        <title>Structural and spectroscopic characterisation of a heme peroxidase from sorghum.</title>
        <authorList>
            <person name="Nnamchi C.I."/>
            <person name="Parkin G."/>
            <person name="Efimov I."/>
            <person name="Basran J."/>
            <person name="Kwon H."/>
            <person name="Svistunenko D.A."/>
            <person name="Agirre J."/>
            <person name="Okolo B.N."/>
            <person name="Moneke A."/>
            <person name="Nwanguma B.C."/>
            <person name="Moody P.C."/>
            <person name="Raven E.L."/>
        </authorList>
    </citation>
    <scope>X-RAY CRYSTALLOGRAPHY (1.27 ANGSTROMS) OF 34-340 IN COMPLEX WITH CALCIUM; HEME AND INDOLE-3-ACETATE</scope>
    <scope>GLYCOSYLATION AT ASN-234 AND ASN-332</scope>
    <scope>DISULFIDE BONDS</scope>
</reference>
<evidence type="ECO:0000250" key="1">
    <source>
        <dbReference type="UniProtKB" id="P22195"/>
    </source>
</evidence>
<evidence type="ECO:0000255" key="2"/>
<evidence type="ECO:0000255" key="3">
    <source>
        <dbReference type="PROSITE-ProRule" id="PRU00297"/>
    </source>
</evidence>
<evidence type="ECO:0000255" key="4">
    <source>
        <dbReference type="PROSITE-ProRule" id="PRU10012"/>
    </source>
</evidence>
<evidence type="ECO:0000269" key="5">
    <source>
    </source>
</evidence>
<evidence type="ECO:0000269" key="6">
    <source>
    </source>
</evidence>
<evidence type="ECO:0000269" key="7">
    <source ref="3"/>
</evidence>
<evidence type="ECO:0000305" key="8"/>
<evidence type="ECO:0007744" key="9">
    <source>
        <dbReference type="PDB" id="5AOG"/>
    </source>
</evidence>
<evidence type="ECO:0007829" key="10">
    <source>
        <dbReference type="PDB" id="5AOG"/>
    </source>
</evidence>
<sequence>MSRAPTLAAAAAVAAVVLICSSSTATAADGNARQPPLAPGLSFDFYKRSCPKAESIVRSFVQDAVRRDVGLAAGLLRLHFHDCFVQGCDASVLLDGSATGPGEQQAPPNLTLRPTAFKAINDIHDRLHKECGGTVVSCSDVLALAARDSVVVSGGPSYKVPLGRRDSASFATQQDVLSGLPPPTAAVPALLAVLSKINLDATDLVALSGGHTIGLGHCTSFEDRLFPRPDPTLNATFAGQLRRTCPAKGTDRRTPLDVRTPNAFDNKYYVNLVNREGLFTSDQDLFSNARTRALVDKFARSQRDFFDQFAFSVVKMGQIKVLTGTQGQIRTNCSARNAAGTTMLPWSVSVVEEAADESLGVF</sequence>